<reference key="1">
    <citation type="submission" date="2008-10" db="EMBL/GenBank/DDBJ databases">
        <title>Genome sequence of Bacillus anthracis str. CDC 684.</title>
        <authorList>
            <person name="Dodson R.J."/>
            <person name="Munk A.C."/>
            <person name="Brettin T."/>
            <person name="Bruce D."/>
            <person name="Detter C."/>
            <person name="Tapia R."/>
            <person name="Han C."/>
            <person name="Sutton G."/>
            <person name="Sims D."/>
        </authorList>
    </citation>
    <scope>NUCLEOTIDE SEQUENCE [LARGE SCALE GENOMIC DNA]</scope>
    <source>
        <strain>CDC 684 / NRRL 3495</strain>
    </source>
</reference>
<feature type="chain" id="PRO_1000185423" description="UPF0358 protein BAMEG_4202">
    <location>
        <begin position="1"/>
        <end position="95"/>
    </location>
</feature>
<dbReference type="EMBL" id="CP001215">
    <property type="protein sequence ID" value="ACP13703.1"/>
    <property type="molecule type" value="Genomic_DNA"/>
</dbReference>
<dbReference type="RefSeq" id="WP_000135696.1">
    <property type="nucleotide sequence ID" value="NC_012581.1"/>
</dbReference>
<dbReference type="SMR" id="C3LI15"/>
<dbReference type="KEGG" id="bah:BAMEG_4202"/>
<dbReference type="HOGENOM" id="CLU_160493_1_0_9"/>
<dbReference type="Gene3D" id="1.10.287.750">
    <property type="entry name" value="SO2669-like"/>
    <property type="match status" value="1"/>
</dbReference>
<dbReference type="HAMAP" id="MF_01560">
    <property type="entry name" value="UPF0358"/>
    <property type="match status" value="1"/>
</dbReference>
<dbReference type="InterPro" id="IPR009983">
    <property type="entry name" value="UPF0358"/>
</dbReference>
<dbReference type="InterPro" id="IPR036270">
    <property type="entry name" value="UPF0358_sf"/>
</dbReference>
<dbReference type="NCBIfam" id="NF010187">
    <property type="entry name" value="PRK13666.1"/>
    <property type="match status" value="1"/>
</dbReference>
<dbReference type="Pfam" id="PF07408">
    <property type="entry name" value="DUF1507"/>
    <property type="match status" value="1"/>
</dbReference>
<dbReference type="SUPFAM" id="SSF140404">
    <property type="entry name" value="EF2458-like"/>
    <property type="match status" value="1"/>
</dbReference>
<evidence type="ECO:0000255" key="1">
    <source>
        <dbReference type="HAMAP-Rule" id="MF_01560"/>
    </source>
</evidence>
<comment type="similarity">
    <text evidence="1">Belongs to the UPF0358 family.</text>
</comment>
<gene>
    <name type="ordered locus">BAMEG_4202</name>
</gene>
<organism>
    <name type="scientific">Bacillus anthracis (strain CDC 684 / NRRL 3495)</name>
    <dbReference type="NCBI Taxonomy" id="568206"/>
    <lineage>
        <taxon>Bacteria</taxon>
        <taxon>Bacillati</taxon>
        <taxon>Bacillota</taxon>
        <taxon>Bacilli</taxon>
        <taxon>Bacillales</taxon>
        <taxon>Bacillaceae</taxon>
        <taxon>Bacillus</taxon>
        <taxon>Bacillus cereus group</taxon>
    </lineage>
</organism>
<proteinExistence type="inferred from homology"/>
<protein>
    <recommendedName>
        <fullName evidence="1">UPF0358 protein BAMEG_4202</fullName>
    </recommendedName>
</protein>
<name>Y4202_BACAC</name>
<accession>C3LI15</accession>
<sequence length="95" mass="10768">MASETVSNHQEKALALLQADAEKILRLIKVQMDHLTMPQCPLYEEVLDTQMFGLSREVDFAVRLGLIAEEQGKVMLGELERELSALHEAFTNKQQ</sequence>